<feature type="chain" id="PRO_0000241640" description="Large ribosomal subunit protein uL24">
    <location>
        <begin position="1"/>
        <end position="104"/>
    </location>
</feature>
<sequence>MAAKIRRDDEVIVLAGKDKGKRGKVLSVVTESGRLFVEGINLIKKHQKPVPQLNQPGGIVEKEASIDVSNVAIYNSETSKADRVGFKIEDGKKLRIFKSTGKTI</sequence>
<reference key="1">
    <citation type="journal article" date="2005" name="Genome Res.">
        <title>Coping with cold: the genome of the versatile marine Antarctica bacterium Pseudoalteromonas haloplanktis TAC125.</title>
        <authorList>
            <person name="Medigue C."/>
            <person name="Krin E."/>
            <person name="Pascal G."/>
            <person name="Barbe V."/>
            <person name="Bernsel A."/>
            <person name="Bertin P.N."/>
            <person name="Cheung F."/>
            <person name="Cruveiller S."/>
            <person name="D'Amico S."/>
            <person name="Duilio A."/>
            <person name="Fang G."/>
            <person name="Feller G."/>
            <person name="Ho C."/>
            <person name="Mangenot S."/>
            <person name="Marino G."/>
            <person name="Nilsson J."/>
            <person name="Parrilli E."/>
            <person name="Rocha E.P.C."/>
            <person name="Rouy Z."/>
            <person name="Sekowska A."/>
            <person name="Tutino M.L."/>
            <person name="Vallenet D."/>
            <person name="von Heijne G."/>
            <person name="Danchin A."/>
        </authorList>
    </citation>
    <scope>NUCLEOTIDE SEQUENCE [LARGE SCALE GENOMIC DNA]</scope>
    <source>
        <strain>TAC 125</strain>
    </source>
</reference>
<organism>
    <name type="scientific">Pseudoalteromonas translucida (strain TAC 125)</name>
    <dbReference type="NCBI Taxonomy" id="326442"/>
    <lineage>
        <taxon>Bacteria</taxon>
        <taxon>Pseudomonadati</taxon>
        <taxon>Pseudomonadota</taxon>
        <taxon>Gammaproteobacteria</taxon>
        <taxon>Alteromonadales</taxon>
        <taxon>Pseudoalteromonadaceae</taxon>
        <taxon>Pseudoalteromonas</taxon>
    </lineage>
</organism>
<evidence type="ECO:0000255" key="1">
    <source>
        <dbReference type="HAMAP-Rule" id="MF_01326"/>
    </source>
</evidence>
<evidence type="ECO:0000305" key="2"/>
<keyword id="KW-1185">Reference proteome</keyword>
<keyword id="KW-0687">Ribonucleoprotein</keyword>
<keyword id="KW-0689">Ribosomal protein</keyword>
<keyword id="KW-0694">RNA-binding</keyword>
<keyword id="KW-0699">rRNA-binding</keyword>
<gene>
    <name evidence="1" type="primary">rplX</name>
    <name type="ordered locus">PSHAa2819</name>
</gene>
<accession>Q3IJJ6</accession>
<dbReference type="EMBL" id="CR954246">
    <property type="protein sequence ID" value="CAI87856.1"/>
    <property type="molecule type" value="Genomic_DNA"/>
</dbReference>
<dbReference type="SMR" id="Q3IJJ6"/>
<dbReference type="STRING" id="326442.PSHAa2819"/>
<dbReference type="KEGG" id="pha:PSHAa2819"/>
<dbReference type="eggNOG" id="COG0198">
    <property type="taxonomic scope" value="Bacteria"/>
</dbReference>
<dbReference type="HOGENOM" id="CLU_093315_2_2_6"/>
<dbReference type="BioCyc" id="PHAL326442:PSHA_RS13840-MONOMER"/>
<dbReference type="Proteomes" id="UP000006843">
    <property type="component" value="Chromosome I"/>
</dbReference>
<dbReference type="GO" id="GO:1990904">
    <property type="term" value="C:ribonucleoprotein complex"/>
    <property type="evidence" value="ECO:0007669"/>
    <property type="project" value="UniProtKB-KW"/>
</dbReference>
<dbReference type="GO" id="GO:0005840">
    <property type="term" value="C:ribosome"/>
    <property type="evidence" value="ECO:0007669"/>
    <property type="project" value="UniProtKB-KW"/>
</dbReference>
<dbReference type="GO" id="GO:0019843">
    <property type="term" value="F:rRNA binding"/>
    <property type="evidence" value="ECO:0007669"/>
    <property type="project" value="UniProtKB-UniRule"/>
</dbReference>
<dbReference type="GO" id="GO:0003735">
    <property type="term" value="F:structural constituent of ribosome"/>
    <property type="evidence" value="ECO:0007669"/>
    <property type="project" value="InterPro"/>
</dbReference>
<dbReference type="GO" id="GO:0006412">
    <property type="term" value="P:translation"/>
    <property type="evidence" value="ECO:0007669"/>
    <property type="project" value="UniProtKB-UniRule"/>
</dbReference>
<dbReference type="CDD" id="cd06089">
    <property type="entry name" value="KOW_RPL26"/>
    <property type="match status" value="1"/>
</dbReference>
<dbReference type="FunFam" id="2.30.30.30:FF:000004">
    <property type="entry name" value="50S ribosomal protein L24"/>
    <property type="match status" value="1"/>
</dbReference>
<dbReference type="Gene3D" id="2.30.30.30">
    <property type="match status" value="1"/>
</dbReference>
<dbReference type="HAMAP" id="MF_01326_B">
    <property type="entry name" value="Ribosomal_uL24_B"/>
    <property type="match status" value="1"/>
</dbReference>
<dbReference type="InterPro" id="IPR005824">
    <property type="entry name" value="KOW"/>
</dbReference>
<dbReference type="InterPro" id="IPR014722">
    <property type="entry name" value="Rib_uL2_dom2"/>
</dbReference>
<dbReference type="InterPro" id="IPR003256">
    <property type="entry name" value="Ribosomal_uL24"/>
</dbReference>
<dbReference type="InterPro" id="IPR005825">
    <property type="entry name" value="Ribosomal_uL24_CS"/>
</dbReference>
<dbReference type="InterPro" id="IPR041988">
    <property type="entry name" value="Ribosomal_uL24_KOW"/>
</dbReference>
<dbReference type="InterPro" id="IPR008991">
    <property type="entry name" value="Translation_prot_SH3-like_sf"/>
</dbReference>
<dbReference type="NCBIfam" id="TIGR01079">
    <property type="entry name" value="rplX_bact"/>
    <property type="match status" value="1"/>
</dbReference>
<dbReference type="PANTHER" id="PTHR12903">
    <property type="entry name" value="MITOCHONDRIAL RIBOSOMAL PROTEIN L24"/>
    <property type="match status" value="1"/>
</dbReference>
<dbReference type="Pfam" id="PF00467">
    <property type="entry name" value="KOW"/>
    <property type="match status" value="1"/>
</dbReference>
<dbReference type="Pfam" id="PF17136">
    <property type="entry name" value="ribosomal_L24"/>
    <property type="match status" value="1"/>
</dbReference>
<dbReference type="SMART" id="SM00739">
    <property type="entry name" value="KOW"/>
    <property type="match status" value="1"/>
</dbReference>
<dbReference type="SUPFAM" id="SSF50104">
    <property type="entry name" value="Translation proteins SH3-like domain"/>
    <property type="match status" value="1"/>
</dbReference>
<dbReference type="PROSITE" id="PS01108">
    <property type="entry name" value="RIBOSOMAL_L24"/>
    <property type="match status" value="1"/>
</dbReference>
<proteinExistence type="inferred from homology"/>
<protein>
    <recommendedName>
        <fullName evidence="1">Large ribosomal subunit protein uL24</fullName>
    </recommendedName>
    <alternativeName>
        <fullName evidence="2">50S ribosomal protein L24</fullName>
    </alternativeName>
</protein>
<comment type="function">
    <text evidence="1">One of two assembly initiator proteins, it binds directly to the 5'-end of the 23S rRNA, where it nucleates assembly of the 50S subunit.</text>
</comment>
<comment type="function">
    <text evidence="1">One of the proteins that surrounds the polypeptide exit tunnel on the outside of the subunit.</text>
</comment>
<comment type="subunit">
    <text evidence="1">Part of the 50S ribosomal subunit.</text>
</comment>
<comment type="similarity">
    <text evidence="1">Belongs to the universal ribosomal protein uL24 family.</text>
</comment>
<name>RL24_PSET1</name>